<name>RL30_ACTP7</name>
<gene>
    <name evidence="1" type="primary">rpmD</name>
    <name type="ordered locus">APP7_1863</name>
</gene>
<sequence length="59" mass="6653">MAKTIKVTQTRSSIARLPKHKATLKGLGLRHIRHTVELIDTPAVRGMINQVSYMVKVEE</sequence>
<evidence type="ECO:0000255" key="1">
    <source>
        <dbReference type="HAMAP-Rule" id="MF_01371"/>
    </source>
</evidence>
<evidence type="ECO:0000305" key="2"/>
<reference key="1">
    <citation type="submission" date="2008-06" db="EMBL/GenBank/DDBJ databases">
        <title>Genome and proteome analysis of A. pleuropneumoniae serotype 7.</title>
        <authorList>
            <person name="Linke B."/>
            <person name="Buettner F."/>
            <person name="Martinez-Arias R."/>
            <person name="Goesmann A."/>
            <person name="Baltes N."/>
            <person name="Tegetmeyer H."/>
            <person name="Singh M."/>
            <person name="Gerlach G.F."/>
        </authorList>
    </citation>
    <scope>NUCLEOTIDE SEQUENCE [LARGE SCALE GENOMIC DNA]</scope>
    <source>
        <strain>AP76</strain>
    </source>
</reference>
<dbReference type="EMBL" id="CP001091">
    <property type="protein sequence ID" value="ACE62515.1"/>
    <property type="molecule type" value="Genomic_DNA"/>
</dbReference>
<dbReference type="RefSeq" id="WP_005599315.1">
    <property type="nucleotide sequence ID" value="NC_010939.1"/>
</dbReference>
<dbReference type="SMR" id="B3GZ29"/>
<dbReference type="GeneID" id="92743637"/>
<dbReference type="KEGG" id="apa:APP7_1863"/>
<dbReference type="HOGENOM" id="CLU_131047_1_4_6"/>
<dbReference type="Proteomes" id="UP000001226">
    <property type="component" value="Chromosome"/>
</dbReference>
<dbReference type="GO" id="GO:0022625">
    <property type="term" value="C:cytosolic large ribosomal subunit"/>
    <property type="evidence" value="ECO:0007669"/>
    <property type="project" value="TreeGrafter"/>
</dbReference>
<dbReference type="GO" id="GO:0003735">
    <property type="term" value="F:structural constituent of ribosome"/>
    <property type="evidence" value="ECO:0007669"/>
    <property type="project" value="InterPro"/>
</dbReference>
<dbReference type="GO" id="GO:0006412">
    <property type="term" value="P:translation"/>
    <property type="evidence" value="ECO:0007669"/>
    <property type="project" value="UniProtKB-UniRule"/>
</dbReference>
<dbReference type="CDD" id="cd01658">
    <property type="entry name" value="Ribosomal_L30"/>
    <property type="match status" value="1"/>
</dbReference>
<dbReference type="FunFam" id="3.30.1390.20:FF:000001">
    <property type="entry name" value="50S ribosomal protein L30"/>
    <property type="match status" value="1"/>
</dbReference>
<dbReference type="Gene3D" id="3.30.1390.20">
    <property type="entry name" value="Ribosomal protein L30, ferredoxin-like fold domain"/>
    <property type="match status" value="1"/>
</dbReference>
<dbReference type="HAMAP" id="MF_01371_B">
    <property type="entry name" value="Ribosomal_uL30_B"/>
    <property type="match status" value="1"/>
</dbReference>
<dbReference type="InterPro" id="IPR036919">
    <property type="entry name" value="Ribo_uL30_ferredoxin-like_sf"/>
</dbReference>
<dbReference type="InterPro" id="IPR005996">
    <property type="entry name" value="Ribosomal_uL30_bac-type"/>
</dbReference>
<dbReference type="InterPro" id="IPR018038">
    <property type="entry name" value="Ribosomal_uL30_CS"/>
</dbReference>
<dbReference type="InterPro" id="IPR016082">
    <property type="entry name" value="Ribosomal_uL30_ferredoxin-like"/>
</dbReference>
<dbReference type="NCBIfam" id="TIGR01308">
    <property type="entry name" value="rpmD_bact"/>
    <property type="match status" value="1"/>
</dbReference>
<dbReference type="PANTHER" id="PTHR15892:SF2">
    <property type="entry name" value="LARGE RIBOSOMAL SUBUNIT PROTEIN UL30M"/>
    <property type="match status" value="1"/>
</dbReference>
<dbReference type="PANTHER" id="PTHR15892">
    <property type="entry name" value="MITOCHONDRIAL RIBOSOMAL PROTEIN L30"/>
    <property type="match status" value="1"/>
</dbReference>
<dbReference type="Pfam" id="PF00327">
    <property type="entry name" value="Ribosomal_L30"/>
    <property type="match status" value="1"/>
</dbReference>
<dbReference type="PIRSF" id="PIRSF002211">
    <property type="entry name" value="Ribosomal_L30_bac-type"/>
    <property type="match status" value="1"/>
</dbReference>
<dbReference type="SUPFAM" id="SSF55129">
    <property type="entry name" value="Ribosomal protein L30p/L7e"/>
    <property type="match status" value="1"/>
</dbReference>
<dbReference type="PROSITE" id="PS00634">
    <property type="entry name" value="RIBOSOMAL_L30"/>
    <property type="match status" value="1"/>
</dbReference>
<protein>
    <recommendedName>
        <fullName evidence="1">Large ribosomal subunit protein uL30</fullName>
    </recommendedName>
    <alternativeName>
        <fullName evidence="2">50S ribosomal protein L30</fullName>
    </alternativeName>
</protein>
<comment type="subunit">
    <text evidence="1">Part of the 50S ribosomal subunit.</text>
</comment>
<comment type="similarity">
    <text evidence="1">Belongs to the universal ribosomal protein uL30 family.</text>
</comment>
<proteinExistence type="inferred from homology"/>
<feature type="chain" id="PRO_1000144642" description="Large ribosomal subunit protein uL30">
    <location>
        <begin position="1"/>
        <end position="59"/>
    </location>
</feature>
<organism>
    <name type="scientific">Actinobacillus pleuropneumoniae serotype 7 (strain AP76)</name>
    <dbReference type="NCBI Taxonomy" id="537457"/>
    <lineage>
        <taxon>Bacteria</taxon>
        <taxon>Pseudomonadati</taxon>
        <taxon>Pseudomonadota</taxon>
        <taxon>Gammaproteobacteria</taxon>
        <taxon>Pasteurellales</taxon>
        <taxon>Pasteurellaceae</taxon>
        <taxon>Actinobacillus</taxon>
    </lineage>
</organism>
<keyword id="KW-0687">Ribonucleoprotein</keyword>
<keyword id="KW-0689">Ribosomal protein</keyword>
<accession>B3GZ29</accession>